<proteinExistence type="inferred from homology"/>
<gene>
    <name evidence="1" type="primary">fusA</name>
    <name type="ordered locus">Hmuk_0504</name>
</gene>
<dbReference type="EMBL" id="CP001688">
    <property type="protein sequence ID" value="ACV46638.1"/>
    <property type="molecule type" value="Genomic_DNA"/>
</dbReference>
<dbReference type="RefSeq" id="WP_012808031.1">
    <property type="nucleotide sequence ID" value="NC_013202.1"/>
</dbReference>
<dbReference type="SMR" id="C7NYH7"/>
<dbReference type="STRING" id="485914.Hmuk_0504"/>
<dbReference type="GeneID" id="42178398"/>
<dbReference type="GeneID" id="8410004"/>
<dbReference type="KEGG" id="hmu:Hmuk_0504"/>
<dbReference type="eggNOG" id="arCOG01559">
    <property type="taxonomic scope" value="Archaea"/>
</dbReference>
<dbReference type="HOGENOM" id="CLU_002794_11_1_2"/>
<dbReference type="OrthoDB" id="6290at2157"/>
<dbReference type="Proteomes" id="UP000001746">
    <property type="component" value="Chromosome"/>
</dbReference>
<dbReference type="GO" id="GO:0005829">
    <property type="term" value="C:cytosol"/>
    <property type="evidence" value="ECO:0007669"/>
    <property type="project" value="TreeGrafter"/>
</dbReference>
<dbReference type="GO" id="GO:1990904">
    <property type="term" value="C:ribonucleoprotein complex"/>
    <property type="evidence" value="ECO:0007669"/>
    <property type="project" value="TreeGrafter"/>
</dbReference>
<dbReference type="GO" id="GO:0005525">
    <property type="term" value="F:GTP binding"/>
    <property type="evidence" value="ECO:0007669"/>
    <property type="project" value="UniProtKB-UniRule"/>
</dbReference>
<dbReference type="GO" id="GO:0003924">
    <property type="term" value="F:GTPase activity"/>
    <property type="evidence" value="ECO:0007669"/>
    <property type="project" value="InterPro"/>
</dbReference>
<dbReference type="GO" id="GO:0003746">
    <property type="term" value="F:translation elongation factor activity"/>
    <property type="evidence" value="ECO:0007669"/>
    <property type="project" value="UniProtKB-UniRule"/>
</dbReference>
<dbReference type="CDD" id="cd01681">
    <property type="entry name" value="aeEF2_snRNP_like_IV"/>
    <property type="match status" value="1"/>
</dbReference>
<dbReference type="CDD" id="cd01885">
    <property type="entry name" value="EF2"/>
    <property type="match status" value="1"/>
</dbReference>
<dbReference type="CDD" id="cd16268">
    <property type="entry name" value="EF2_II"/>
    <property type="match status" value="1"/>
</dbReference>
<dbReference type="CDD" id="cd16261">
    <property type="entry name" value="EF2_snRNP_III"/>
    <property type="match status" value="1"/>
</dbReference>
<dbReference type="CDD" id="cd01514">
    <property type="entry name" value="Elongation_Factor_C"/>
    <property type="match status" value="1"/>
</dbReference>
<dbReference type="FunFam" id="2.40.30.10:FF:000110">
    <property type="entry name" value="Elongation factor 2"/>
    <property type="match status" value="1"/>
</dbReference>
<dbReference type="FunFam" id="3.30.70.240:FF:000010">
    <property type="entry name" value="Elongation factor 2"/>
    <property type="match status" value="1"/>
</dbReference>
<dbReference type="FunFam" id="3.40.50.300:FF:000684">
    <property type="entry name" value="Elongation factor 2"/>
    <property type="match status" value="1"/>
</dbReference>
<dbReference type="FunFam" id="3.30.70.870:FF:000002">
    <property type="entry name" value="Translation elongation factor 2"/>
    <property type="match status" value="1"/>
</dbReference>
<dbReference type="Gene3D" id="3.30.230.10">
    <property type="match status" value="1"/>
</dbReference>
<dbReference type="Gene3D" id="3.30.70.240">
    <property type="match status" value="1"/>
</dbReference>
<dbReference type="Gene3D" id="3.30.70.870">
    <property type="entry name" value="Elongation Factor G (Translational Gtpase), domain 3"/>
    <property type="match status" value="1"/>
</dbReference>
<dbReference type="Gene3D" id="3.40.50.300">
    <property type="entry name" value="P-loop containing nucleotide triphosphate hydrolases"/>
    <property type="match status" value="1"/>
</dbReference>
<dbReference type="Gene3D" id="2.40.30.10">
    <property type="entry name" value="Translation factors"/>
    <property type="match status" value="1"/>
</dbReference>
<dbReference type="HAMAP" id="MF_00054_A">
    <property type="entry name" value="EF_G_EF_2_A"/>
    <property type="match status" value="1"/>
</dbReference>
<dbReference type="InterPro" id="IPR041095">
    <property type="entry name" value="EFG_II"/>
</dbReference>
<dbReference type="InterPro" id="IPR035647">
    <property type="entry name" value="EFG_III/V"/>
</dbReference>
<dbReference type="InterPro" id="IPR000640">
    <property type="entry name" value="EFG_V-like"/>
</dbReference>
<dbReference type="InterPro" id="IPR004161">
    <property type="entry name" value="EFTu-like_2"/>
</dbReference>
<dbReference type="InterPro" id="IPR031157">
    <property type="entry name" value="G_TR_CS"/>
</dbReference>
<dbReference type="InterPro" id="IPR027417">
    <property type="entry name" value="P-loop_NTPase"/>
</dbReference>
<dbReference type="InterPro" id="IPR020568">
    <property type="entry name" value="Ribosomal_Su5_D2-typ_SF"/>
</dbReference>
<dbReference type="InterPro" id="IPR014721">
    <property type="entry name" value="Ribsml_uS5_D2-typ_fold_subgr"/>
</dbReference>
<dbReference type="InterPro" id="IPR005225">
    <property type="entry name" value="Small_GTP-bd"/>
</dbReference>
<dbReference type="InterPro" id="IPR000795">
    <property type="entry name" value="T_Tr_GTP-bd_dom"/>
</dbReference>
<dbReference type="InterPro" id="IPR009000">
    <property type="entry name" value="Transl_B-barrel_sf"/>
</dbReference>
<dbReference type="InterPro" id="IPR004543">
    <property type="entry name" value="Transl_elong_EFG/EF2_arc"/>
</dbReference>
<dbReference type="InterPro" id="IPR005517">
    <property type="entry name" value="Transl_elong_EFG/EF2_IV"/>
</dbReference>
<dbReference type="NCBIfam" id="TIGR00490">
    <property type="entry name" value="aEF-2"/>
    <property type="match status" value="1"/>
</dbReference>
<dbReference type="NCBIfam" id="TIGR00231">
    <property type="entry name" value="small_GTP"/>
    <property type="match status" value="1"/>
</dbReference>
<dbReference type="PANTHER" id="PTHR42908:SF3">
    <property type="entry name" value="ELONGATION FACTOR-LIKE GTPASE 1"/>
    <property type="match status" value="1"/>
</dbReference>
<dbReference type="PANTHER" id="PTHR42908">
    <property type="entry name" value="TRANSLATION ELONGATION FACTOR-RELATED"/>
    <property type="match status" value="1"/>
</dbReference>
<dbReference type="Pfam" id="PF00679">
    <property type="entry name" value="EFG_C"/>
    <property type="match status" value="1"/>
</dbReference>
<dbReference type="Pfam" id="PF14492">
    <property type="entry name" value="EFG_III"/>
    <property type="match status" value="1"/>
</dbReference>
<dbReference type="Pfam" id="PF03764">
    <property type="entry name" value="EFG_IV"/>
    <property type="match status" value="1"/>
</dbReference>
<dbReference type="Pfam" id="PF00009">
    <property type="entry name" value="GTP_EFTU"/>
    <property type="match status" value="1"/>
</dbReference>
<dbReference type="Pfam" id="PF03144">
    <property type="entry name" value="GTP_EFTU_D2"/>
    <property type="match status" value="1"/>
</dbReference>
<dbReference type="PRINTS" id="PR00315">
    <property type="entry name" value="ELONGATNFCT"/>
</dbReference>
<dbReference type="SMART" id="SM00838">
    <property type="entry name" value="EFG_C"/>
    <property type="match status" value="1"/>
</dbReference>
<dbReference type="SMART" id="SM00889">
    <property type="entry name" value="EFG_IV"/>
    <property type="match status" value="1"/>
</dbReference>
<dbReference type="SUPFAM" id="SSF54980">
    <property type="entry name" value="EF-G C-terminal domain-like"/>
    <property type="match status" value="2"/>
</dbReference>
<dbReference type="SUPFAM" id="SSF52540">
    <property type="entry name" value="P-loop containing nucleoside triphosphate hydrolases"/>
    <property type="match status" value="1"/>
</dbReference>
<dbReference type="SUPFAM" id="SSF54211">
    <property type="entry name" value="Ribosomal protein S5 domain 2-like"/>
    <property type="match status" value="1"/>
</dbReference>
<dbReference type="SUPFAM" id="SSF50447">
    <property type="entry name" value="Translation proteins"/>
    <property type="match status" value="1"/>
</dbReference>
<dbReference type="PROSITE" id="PS00301">
    <property type="entry name" value="G_TR_1"/>
    <property type="match status" value="1"/>
</dbReference>
<dbReference type="PROSITE" id="PS51722">
    <property type="entry name" value="G_TR_2"/>
    <property type="match status" value="1"/>
</dbReference>
<comment type="function">
    <text evidence="1">Catalyzes the GTP-dependent ribosomal translocation step during translation elongation. During this step, the ribosome changes from the pre-translocational (PRE) to the post-translocational (POST) state as the newly formed A-site-bound peptidyl-tRNA and P-site-bound deacylated tRNA move to the P and E sites, respectively. Catalyzes the coordinated movement of the two tRNA molecules, the mRNA and conformational changes in the ribosome.</text>
</comment>
<comment type="subcellular location">
    <subcellularLocation>
        <location evidence="1">Cytoplasm</location>
    </subcellularLocation>
</comment>
<comment type="similarity">
    <text evidence="1">Belongs to the TRAFAC class translation factor GTPase superfamily. Classic translation factor GTPase family. EF-G/EF-2 subfamily.</text>
</comment>
<feature type="chain" id="PRO_0000408959" description="Elongation factor 2">
    <location>
        <begin position="1"/>
        <end position="729"/>
    </location>
</feature>
<feature type="domain" description="tr-type G">
    <location>
        <begin position="19"/>
        <end position="262"/>
    </location>
</feature>
<feature type="binding site" evidence="1">
    <location>
        <begin position="28"/>
        <end position="35"/>
    </location>
    <ligand>
        <name>GTP</name>
        <dbReference type="ChEBI" id="CHEBI:37565"/>
    </ligand>
</feature>
<feature type="binding site" evidence="1">
    <location>
        <begin position="94"/>
        <end position="98"/>
    </location>
    <ligand>
        <name>GTP</name>
        <dbReference type="ChEBI" id="CHEBI:37565"/>
    </ligand>
</feature>
<feature type="binding site" evidence="1">
    <location>
        <begin position="148"/>
        <end position="151"/>
    </location>
    <ligand>
        <name>GTP</name>
        <dbReference type="ChEBI" id="CHEBI:37565"/>
    </ligand>
</feature>
<feature type="modified residue" description="Diphthamide" evidence="1">
    <location>
        <position position="597"/>
    </location>
</feature>
<keyword id="KW-0963">Cytoplasm</keyword>
<keyword id="KW-0251">Elongation factor</keyword>
<keyword id="KW-0342">GTP-binding</keyword>
<keyword id="KW-0547">Nucleotide-binding</keyword>
<keyword id="KW-0648">Protein biosynthesis</keyword>
<keyword id="KW-1185">Reference proteome</keyword>
<accession>C7NYH7</accession>
<sequence length="729" mass="80638">MGRRKKIVQECETLMNTPEQIRNIAIAAHVDHGKTTLTDNLLAGAGMISDDTAGEQLAMDTEEDEQERGITIDAANVSMTHEYEDTNHLINLIDTPGHVDFGGDVTRAMRAVDGALVVVDAVEGAMPQTETVLRQALREGVKPTLFINKVDRLISELQEGPEEMQKRLMSVIADVNELIRGMTEEMDDIDEDWTVSVEEGTVGFGSALYKWGVSMPSMQRTGMDFGDIMDLERSDKRQELHERTPLADVVLDMVCEHFPNPIDAQPRRIPRIWRGDDESEVAESMQFVDEDGEVVLMVTDIGVDPHAGEIAAGRVFSGTLEKGQELYVSGTAGKNRVQSVGIYMGGEREEVEEVPAGNIAAVTGLKDAIAGSTVSSVEMTPFESIDHISEPVITKSIEAKNMDDLPKLIETLRQVSKEDPTIQIEINEDTGEHLISGQGELHLEVQTQRIERNQGIPVNTGEPIVVYREAPQQPSREVEGISPNRHNRFYISVEPLEQDIVDAIKLGDASMDMPELERREALQEAGMEKETSQNVEHIHGTNVFIDDTKGIQHLNETMELLIEGLEEALNDGPLAAEPVQGSLIRLHDARLHEDAIHRGPAQVIPAMREAVHNSLIDAEIRLLEPIQNVRIDVPNAHMGAASGEIQGRRGRVDDMYQEGDLMVVEGVAPVDEMIGFSSDIRSATEGRASWNTENAGFQVMADNLQPDKIDEIRTRKGMKLELPETIDYF</sequence>
<reference key="1">
    <citation type="journal article" date="2009" name="Stand. Genomic Sci.">
        <title>Complete genome sequence of Halomicrobium mukohataei type strain (arg-2).</title>
        <authorList>
            <person name="Tindall B.J."/>
            <person name="Schneider S."/>
            <person name="Lapidus A."/>
            <person name="Copeland A."/>
            <person name="Glavina Del Rio T."/>
            <person name="Nolan M."/>
            <person name="Lucas S."/>
            <person name="Chen F."/>
            <person name="Tice H."/>
            <person name="Cheng J.F."/>
            <person name="Saunders E."/>
            <person name="Bruce D."/>
            <person name="Goodwin L."/>
            <person name="Pitluck S."/>
            <person name="Mikhailova N."/>
            <person name="Pati A."/>
            <person name="Ivanova N."/>
            <person name="Mavrommatis K."/>
            <person name="Chen A."/>
            <person name="Palaniappan K."/>
            <person name="Chain P."/>
            <person name="Land M."/>
            <person name="Hauser L."/>
            <person name="Chang Y.J."/>
            <person name="Jeffries C.D."/>
            <person name="Brettin T."/>
            <person name="Han C."/>
            <person name="Rohde M."/>
            <person name="Goker M."/>
            <person name="Bristow J."/>
            <person name="Eisen J.A."/>
            <person name="Markowitz V."/>
            <person name="Hugenholtz P."/>
            <person name="Klenk H.P."/>
            <person name="Kyrpides N.C."/>
            <person name="Detter J.C."/>
        </authorList>
    </citation>
    <scope>NUCLEOTIDE SEQUENCE [LARGE SCALE GENOMIC DNA]</scope>
    <source>
        <strain>ATCC 700874 / DSM 12286 / JCM 9738 / NCIMB 13541</strain>
    </source>
</reference>
<name>EF2_HALMD</name>
<evidence type="ECO:0000255" key="1">
    <source>
        <dbReference type="HAMAP-Rule" id="MF_00054"/>
    </source>
</evidence>
<organism>
    <name type="scientific">Halomicrobium mukohataei (strain ATCC 700874 / DSM 12286 / JCM 9738 / NCIMB 13541)</name>
    <name type="common">Haloarcula mukohataei</name>
    <dbReference type="NCBI Taxonomy" id="485914"/>
    <lineage>
        <taxon>Archaea</taxon>
        <taxon>Methanobacteriati</taxon>
        <taxon>Methanobacteriota</taxon>
        <taxon>Stenosarchaea group</taxon>
        <taxon>Halobacteria</taxon>
        <taxon>Halobacteriales</taxon>
        <taxon>Haloarculaceae</taxon>
        <taxon>Halomicrobium</taxon>
    </lineage>
</organism>
<protein>
    <recommendedName>
        <fullName evidence="1">Elongation factor 2</fullName>
        <shortName evidence="1">EF-2</shortName>
    </recommendedName>
</protein>